<dbReference type="EC" id="2.6.1.-" evidence="6"/>
<dbReference type="EMBL" id="DQ143963">
    <property type="protein sequence ID" value="AAZ78340.1"/>
    <property type="molecule type" value="Genomic_DNA"/>
</dbReference>
<dbReference type="RefSeq" id="WP_003981034.1">
    <property type="nucleotide sequence ID" value="NZ_SADA01000149.1"/>
</dbReference>
<dbReference type="SMR" id="Q3S8P9"/>
<dbReference type="GeneID" id="66859922"/>
<dbReference type="KEGG" id="ag:AAZ78340"/>
<dbReference type="OMA" id="IVWINYP"/>
<dbReference type="UniPathway" id="UPA00926"/>
<dbReference type="GO" id="GO:0030170">
    <property type="term" value="F:pyridoxal phosphate binding"/>
    <property type="evidence" value="ECO:0007669"/>
    <property type="project" value="InterPro"/>
</dbReference>
<dbReference type="GO" id="GO:0008483">
    <property type="term" value="F:transaminase activity"/>
    <property type="evidence" value="ECO:0007669"/>
    <property type="project" value="UniProtKB-KW"/>
</dbReference>
<dbReference type="GO" id="GO:0017000">
    <property type="term" value="P:antibiotic biosynthetic process"/>
    <property type="evidence" value="ECO:0007669"/>
    <property type="project" value="UniProtKB-KW"/>
</dbReference>
<dbReference type="CDD" id="cd00609">
    <property type="entry name" value="AAT_like"/>
    <property type="match status" value="1"/>
</dbReference>
<dbReference type="Gene3D" id="3.90.1150.10">
    <property type="entry name" value="Aspartate Aminotransferase, domain 1"/>
    <property type="match status" value="1"/>
</dbReference>
<dbReference type="Gene3D" id="3.40.640.10">
    <property type="entry name" value="Type I PLP-dependent aspartate aminotransferase-like (Major domain)"/>
    <property type="match status" value="1"/>
</dbReference>
<dbReference type="InterPro" id="IPR004839">
    <property type="entry name" value="Aminotransferase_I/II_large"/>
</dbReference>
<dbReference type="InterPro" id="IPR050881">
    <property type="entry name" value="LL-DAP_aminotransferase"/>
</dbReference>
<dbReference type="InterPro" id="IPR019880">
    <property type="entry name" value="OxyQ"/>
</dbReference>
<dbReference type="InterPro" id="IPR015424">
    <property type="entry name" value="PyrdxlP-dep_Trfase"/>
</dbReference>
<dbReference type="InterPro" id="IPR015421">
    <property type="entry name" value="PyrdxlP-dep_Trfase_major"/>
</dbReference>
<dbReference type="InterPro" id="IPR015422">
    <property type="entry name" value="PyrdxlP-dep_Trfase_small"/>
</dbReference>
<dbReference type="NCBIfam" id="TIGR03539">
    <property type="entry name" value="DapC_actino"/>
    <property type="match status" value="1"/>
</dbReference>
<dbReference type="PANTHER" id="PTHR42832">
    <property type="entry name" value="AMINO ACID AMINOTRANSFERASE"/>
    <property type="match status" value="1"/>
</dbReference>
<dbReference type="PANTHER" id="PTHR42832:SF3">
    <property type="entry name" value="L-GLUTAMINE--4-(METHYLSULFANYL)-2-OXOBUTANOATE AMINOTRANSFERASE"/>
    <property type="match status" value="1"/>
</dbReference>
<dbReference type="Pfam" id="PF00155">
    <property type="entry name" value="Aminotran_1_2"/>
    <property type="match status" value="1"/>
</dbReference>
<dbReference type="SUPFAM" id="SSF53383">
    <property type="entry name" value="PLP-dependent transferases"/>
    <property type="match status" value="1"/>
</dbReference>
<dbReference type="PROSITE" id="PS00105">
    <property type="entry name" value="AA_TRANSFER_CLASS_1"/>
    <property type="match status" value="1"/>
</dbReference>
<comment type="function">
    <text evidence="2">Involved in the biosynthesis of the tetracycline antibiotic, oxytetracycline. Catalyzes the conversion of 4-dedimethylamino-4-oxoanhydrotetracycline to yield 4-amino-4-de(dimethylamino)anhydrotetracycline (4-amino-ATC).</text>
</comment>
<comment type="cofactor">
    <cofactor evidence="1">
        <name>pyridoxal 5'-phosphate</name>
        <dbReference type="ChEBI" id="CHEBI:597326"/>
    </cofactor>
</comment>
<comment type="pathway">
    <text evidence="6">Antibiotic biosynthesis; oxytetracycline biosynthesis.</text>
</comment>
<comment type="disruption phenotype">
    <text evidence="2">Cells lacking this gene are unable to produce the tetracycline intermediate anhydrotetracycline (ATC).</text>
</comment>
<comment type="similarity">
    <text evidence="5">Belongs to the class-I pyridoxal-phosphate-dependent aminotransferase family.</text>
</comment>
<organism>
    <name type="scientific">Streptomyces rimosus</name>
    <dbReference type="NCBI Taxonomy" id="1927"/>
    <lineage>
        <taxon>Bacteria</taxon>
        <taxon>Bacillati</taxon>
        <taxon>Actinomycetota</taxon>
        <taxon>Actinomycetes</taxon>
        <taxon>Kitasatosporales</taxon>
        <taxon>Streptomycetaceae</taxon>
        <taxon>Streptomyces</taxon>
    </lineage>
</organism>
<accession>Q3S8P9</accession>
<feature type="chain" id="PRO_0000442359" description="4-dedimethylamino-4-oxo-anhydrotetracycline transaminase OxyQ">
    <location>
        <begin position="1"/>
        <end position="359"/>
    </location>
</feature>
<feature type="binding site" evidence="1">
    <location>
        <position position="32"/>
    </location>
    <ligand>
        <name>substrate</name>
    </ligand>
</feature>
<feature type="binding site" evidence="1">
    <location>
        <begin position="91"/>
        <end position="92"/>
    </location>
    <ligand>
        <name>pyridoxal 5'-phosphate</name>
        <dbReference type="ChEBI" id="CHEBI:597326"/>
    </ligand>
</feature>
<feature type="binding site" evidence="1">
    <location>
        <position position="92"/>
    </location>
    <ligand>
        <name>substrate</name>
    </ligand>
</feature>
<feature type="binding site" evidence="1">
    <location>
        <position position="155"/>
    </location>
    <ligand>
        <name>pyridoxal 5'-phosphate</name>
        <dbReference type="ChEBI" id="CHEBI:597326"/>
    </ligand>
</feature>
<feature type="binding site" evidence="1">
    <location>
        <position position="155"/>
    </location>
    <ligand>
        <name>substrate</name>
    </ligand>
</feature>
<feature type="binding site" evidence="1">
    <location>
        <position position="186"/>
    </location>
    <ligand>
        <name>pyridoxal 5'-phosphate</name>
        <dbReference type="ChEBI" id="CHEBI:597326"/>
    </ligand>
</feature>
<feature type="binding site" evidence="1">
    <location>
        <begin position="216"/>
        <end position="218"/>
    </location>
    <ligand>
        <name>pyridoxal 5'-phosphate</name>
        <dbReference type="ChEBI" id="CHEBI:597326"/>
    </ligand>
</feature>
<feature type="binding site" evidence="1">
    <location>
        <position position="227"/>
    </location>
    <ligand>
        <name>pyridoxal 5'-phosphate</name>
        <dbReference type="ChEBI" id="CHEBI:597326"/>
    </ligand>
</feature>
<feature type="binding site" evidence="1">
    <location>
        <position position="341"/>
    </location>
    <ligand>
        <name>substrate</name>
    </ligand>
</feature>
<feature type="modified residue" description="N6-(pyridoxal phosphate)lysine" evidence="1">
    <location>
        <position position="219"/>
    </location>
</feature>
<protein>
    <recommendedName>
        <fullName evidence="4">4-dedimethylamino-4-oxo-anhydrotetracycline transaminase OxyQ</fullName>
        <ecNumber evidence="6">2.6.1.-</ecNumber>
    </recommendedName>
    <alternativeName>
        <fullName evidence="4">PLP-dependent aminotransferase OxyQ</fullName>
    </alternativeName>
    <alternativeName>
        <fullName evidence="4">Reductive transaminase oxyQ</fullName>
    </alternativeName>
</protein>
<evidence type="ECO:0000250" key="1">
    <source>
        <dbReference type="UniProtKB" id="O84395"/>
    </source>
</evidence>
<evidence type="ECO:0000269" key="2">
    <source>
    </source>
</evidence>
<evidence type="ECO:0000303" key="3">
    <source>
    </source>
</evidence>
<evidence type="ECO:0000303" key="4">
    <source>
    </source>
</evidence>
<evidence type="ECO:0000305" key="5"/>
<evidence type="ECO:0000305" key="6">
    <source>
    </source>
</evidence>
<keyword id="KW-0032">Aminotransferase</keyword>
<keyword id="KW-0045">Antibiotic biosynthesis</keyword>
<keyword id="KW-0663">Pyridoxal phosphate</keyword>
<keyword id="KW-0808">Transferase</keyword>
<name>OXYQ_STRRM</name>
<gene>
    <name evidence="3" type="primary">oxyQ</name>
</gene>
<sequence>MRELPEFPWDVLLPYKKRAAAHPDGLVNLALGEPVDATPDVLRDALAAATDAPGYPPTEGTPALREAAAAWLRRRLGVTVDPSAVLPAVGTKELIAWLPAMLGTGPGDTVAFPRLAFPTFDVSARLAGARGRPVDSPLELGSEPVKVVWLNSPSNPEGRVLSVPELREIVAWARDRGAVLVNDECYIEYGWDRRPVSLLDSAVCGGSHDGLLAVHSLSKRSNLAGYRAGVCSGDPALIGRLLQVRKHAGHAVPAPVQAAMVAALEDDAHVERQRDRYAYRRRVLRTALEGAGFRVEHSEGGLFLWATRGEPCWPAVQKLADLGILVAPGAFYGEAGEQYVRIAFTATDERIAAAAARLT</sequence>
<reference key="1">
    <citation type="journal article" date="2006" name="Appl. Environ. Microbiol.">
        <title>Engineered biosynthesis of a novel amidated polyketide, using the malonamyl-specific initmguPCPB_SPHCRiation module from the oxytetracycline polyketide synthase.</title>
        <authorList>
            <person name="Zhang W."/>
            <person name="Ames B.D."/>
            <person name="Tsai S.C."/>
            <person name="Tang Y."/>
        </authorList>
    </citation>
    <scope>NUCLEOTIDE SEQUENCE [GENOMIC DNA]</scope>
</reference>
<reference key="2">
    <citation type="journal article" date="2008" name="J. Am. Chem. Soc.">
        <title>Identifying the minimal enzymes required for anhydrotetracycline biosynthesis.</title>
        <authorList>
            <person name="Zhang W."/>
            <person name="Watanabe K."/>
            <person name="Cai X."/>
            <person name="Jung M.E."/>
            <person name="Tang Y."/>
            <person name="Zhan J."/>
        </authorList>
    </citation>
    <scope>FUNCTION</scope>
    <scope>DISRUPTION PHENOTYPE</scope>
    <scope>PATHWAY</scope>
</reference>
<proteinExistence type="inferred from homology"/>